<sequence>MRCSLQFLGVLMFWISGVSGDIVITQDELSNPVTSGESVSISCRSSKSLLYKDGKTYLNWFLQRPGQSPQLLIYLMSTRASGVSDRFSGSGSGTDFTLEISRVKAEDVGVYYCQQLVEYP</sequence>
<proteinExistence type="predicted"/>
<protein>
    <recommendedName>
        <fullName evidence="3">Immunoglobulin kappa variable 2-112</fullName>
    </recommendedName>
    <alternativeName>
        <fullName evidence="2">Ig kappa chain V-II region VKappa167</fullName>
    </alternativeName>
</protein>
<reference key="1">
    <citation type="journal article" date="1981" name="Cell">
        <title>Somatic mutation of immunoglobulin light-chain variable-region genes.</title>
        <authorList>
            <person name="Selsing E."/>
            <person name="Storb U."/>
        </authorList>
    </citation>
    <scope>NUCLEOTIDE SEQUENCE [GENOMIC DNA]</scope>
</reference>
<keyword id="KW-1064">Adaptive immunity</keyword>
<keyword id="KW-1015">Disulfide bond</keyword>
<keyword id="KW-0391">Immunity</keyword>
<keyword id="KW-1280">Immunoglobulin</keyword>
<keyword id="KW-1185">Reference proteome</keyword>
<keyword id="KW-0732">Signal</keyword>
<gene>
    <name evidence="3" type="primary">Igkv2-112</name>
    <name evidence="3" type="synonym">Gm5153</name>
</gene>
<organism>
    <name type="scientific">Mus musculus</name>
    <name type="common">Mouse</name>
    <dbReference type="NCBI Taxonomy" id="10090"/>
    <lineage>
        <taxon>Eukaryota</taxon>
        <taxon>Metazoa</taxon>
        <taxon>Chordata</taxon>
        <taxon>Craniata</taxon>
        <taxon>Vertebrata</taxon>
        <taxon>Euteleostomi</taxon>
        <taxon>Mammalia</taxon>
        <taxon>Eutheria</taxon>
        <taxon>Euarchontoglires</taxon>
        <taxon>Glires</taxon>
        <taxon>Rodentia</taxon>
        <taxon>Myomorpha</taxon>
        <taxon>Muroidea</taxon>
        <taxon>Muridae</taxon>
        <taxon>Murinae</taxon>
        <taxon>Mus</taxon>
        <taxon>Mus</taxon>
    </lineage>
</organism>
<name>KV2A2_MOUSE</name>
<accession>P01627</accession>
<evidence type="ECO:0000255" key="1">
    <source>
        <dbReference type="PROSITE-ProRule" id="PRU00114"/>
    </source>
</evidence>
<evidence type="ECO:0000305" key="2"/>
<evidence type="ECO:0000312" key="3">
    <source>
        <dbReference type="MGI" id="MGI:3644894"/>
    </source>
</evidence>
<dbReference type="EMBL" id="J00562">
    <property type="protein sequence ID" value="AAA39032.1"/>
    <property type="molecule type" value="Genomic_DNA"/>
</dbReference>
<dbReference type="EMBL" id="K02415">
    <property type="protein sequence ID" value="AAA39051.1"/>
    <property type="molecule type" value="Genomic_DNA"/>
</dbReference>
<dbReference type="PIR" id="A01909">
    <property type="entry name" value="KVMS67"/>
</dbReference>
<dbReference type="EMDB" id="EMD-29905"/>
<dbReference type="EMDB" id="EMD-38171"/>
<dbReference type="EMDB" id="EMD-7621"/>
<dbReference type="SMR" id="P01627"/>
<dbReference type="FunCoup" id="P01627">
    <property type="interactions" value="442"/>
</dbReference>
<dbReference type="CPTAC" id="non-CPTAC-3470"/>
<dbReference type="Ensembl" id="ENSMUST00000103318.6">
    <property type="protein sequence ID" value="ENSMUSP00000100119.3"/>
    <property type="gene ID" value="ENSMUSG00000076518.7"/>
</dbReference>
<dbReference type="AGR" id="MGI:3644894"/>
<dbReference type="MGI" id="MGI:3644894">
    <property type="gene designation" value="Igkv2-112"/>
</dbReference>
<dbReference type="VEuPathDB" id="HostDB:ENSMUSG00000076518"/>
<dbReference type="GeneTree" id="ENSGT00940000153770"/>
<dbReference type="HOGENOM" id="CLU_077975_4_1_1"/>
<dbReference type="InParanoid" id="P01627"/>
<dbReference type="OMA" id="YWFLQKA"/>
<dbReference type="OrthoDB" id="9605868at2759"/>
<dbReference type="PhylomeDB" id="P01627"/>
<dbReference type="Reactome" id="R-MMU-166663">
    <property type="pathway name" value="Initial triggering of complement"/>
</dbReference>
<dbReference type="Reactome" id="R-MMU-173623">
    <property type="pathway name" value="Classical antibody-mediated complement activation"/>
</dbReference>
<dbReference type="Reactome" id="R-MMU-198933">
    <property type="pathway name" value="Immunoregulatory interactions between a Lymphoid and a non-Lymphoid cell"/>
</dbReference>
<dbReference type="Reactome" id="R-MMU-202733">
    <property type="pathway name" value="Cell surface interactions at the vascular wall"/>
</dbReference>
<dbReference type="Reactome" id="R-MMU-2029481">
    <property type="pathway name" value="FCGR activation"/>
</dbReference>
<dbReference type="Reactome" id="R-MMU-2029482">
    <property type="pathway name" value="Regulation of actin dynamics for phagocytic cup formation"/>
</dbReference>
<dbReference type="Reactome" id="R-MMU-2029485">
    <property type="pathway name" value="Role of phospholipids in phagocytosis"/>
</dbReference>
<dbReference type="Reactome" id="R-MMU-2168880">
    <property type="pathway name" value="Scavenging of heme from plasma"/>
</dbReference>
<dbReference type="Reactome" id="R-MMU-2454202">
    <property type="pathway name" value="Fc epsilon receptor (FCERI) signaling"/>
</dbReference>
<dbReference type="Reactome" id="R-MMU-2730905">
    <property type="pathway name" value="Role of LAT2/NTAL/LAB on calcium mobilization"/>
</dbReference>
<dbReference type="Reactome" id="R-MMU-2871796">
    <property type="pathway name" value="FCERI mediated MAPK activation"/>
</dbReference>
<dbReference type="Reactome" id="R-MMU-2871809">
    <property type="pathway name" value="FCERI mediated Ca+2 mobilization"/>
</dbReference>
<dbReference type="Reactome" id="R-MMU-2871837">
    <property type="pathway name" value="FCERI mediated NF-kB activation"/>
</dbReference>
<dbReference type="Reactome" id="R-MMU-5690714">
    <property type="pathway name" value="CD22 mediated BCR regulation"/>
</dbReference>
<dbReference type="Reactome" id="R-MMU-977606">
    <property type="pathway name" value="Regulation of Complement cascade"/>
</dbReference>
<dbReference type="Reactome" id="R-MMU-983695">
    <property type="pathway name" value="Antigen activates B Cell Receptor (BCR) leading to generation of second messengers"/>
</dbReference>
<dbReference type="ChiTaRS" id="Igkv2-112">
    <property type="organism name" value="mouse"/>
</dbReference>
<dbReference type="PRO" id="PR:P01627"/>
<dbReference type="Proteomes" id="UP000000589">
    <property type="component" value="Chromosome 6"/>
</dbReference>
<dbReference type="RNAct" id="P01627">
    <property type="molecule type" value="protein"/>
</dbReference>
<dbReference type="Bgee" id="ENSMUSG00000076518">
    <property type="expression patterns" value="Expressed in spleen and 30 other cell types or tissues"/>
</dbReference>
<dbReference type="ExpressionAtlas" id="P01627">
    <property type="expression patterns" value="baseline and differential"/>
</dbReference>
<dbReference type="GO" id="GO:0019814">
    <property type="term" value="C:immunoglobulin complex"/>
    <property type="evidence" value="ECO:0007669"/>
    <property type="project" value="UniProtKB-KW"/>
</dbReference>
<dbReference type="GO" id="GO:0002250">
    <property type="term" value="P:adaptive immune response"/>
    <property type="evidence" value="ECO:0007669"/>
    <property type="project" value="UniProtKB-KW"/>
</dbReference>
<dbReference type="FunFam" id="2.60.40.10:FF:002747">
    <property type="entry name" value="Ig kappa chain V region GOM"/>
    <property type="match status" value="1"/>
</dbReference>
<dbReference type="Gene3D" id="2.60.40.10">
    <property type="entry name" value="Immunoglobulins"/>
    <property type="match status" value="1"/>
</dbReference>
<dbReference type="InterPro" id="IPR007110">
    <property type="entry name" value="Ig-like_dom"/>
</dbReference>
<dbReference type="InterPro" id="IPR036179">
    <property type="entry name" value="Ig-like_dom_sf"/>
</dbReference>
<dbReference type="InterPro" id="IPR013783">
    <property type="entry name" value="Ig-like_fold"/>
</dbReference>
<dbReference type="InterPro" id="IPR013106">
    <property type="entry name" value="Ig_V-set"/>
</dbReference>
<dbReference type="InterPro" id="IPR050150">
    <property type="entry name" value="IgV_Light_Chain"/>
</dbReference>
<dbReference type="PANTHER" id="PTHR23267">
    <property type="entry name" value="IMMUNOGLOBULIN LIGHT CHAIN"/>
    <property type="match status" value="1"/>
</dbReference>
<dbReference type="Pfam" id="PF07686">
    <property type="entry name" value="V-set"/>
    <property type="match status" value="1"/>
</dbReference>
<dbReference type="SMART" id="SM00406">
    <property type="entry name" value="IGv"/>
    <property type="match status" value="1"/>
</dbReference>
<dbReference type="SUPFAM" id="SSF48726">
    <property type="entry name" value="Immunoglobulin"/>
    <property type="match status" value="1"/>
</dbReference>
<dbReference type="PROSITE" id="PS50835">
    <property type="entry name" value="IG_LIKE"/>
    <property type="match status" value="1"/>
</dbReference>
<feature type="signal peptide">
    <location>
        <begin position="1"/>
        <end position="20"/>
    </location>
</feature>
<feature type="chain" id="PRO_0000015185" description="Immunoglobulin kappa variable 2-112">
    <location>
        <begin position="21"/>
        <end position="120"/>
    </location>
</feature>
<feature type="region of interest" description="Framework-1">
    <location>
        <begin position="21"/>
        <end position="43"/>
    </location>
</feature>
<feature type="region of interest" description="Complementarity-determining-1">
    <location>
        <begin position="44"/>
        <end position="59"/>
    </location>
</feature>
<feature type="region of interest" description="Framework-2">
    <location>
        <begin position="60"/>
        <end position="74"/>
    </location>
</feature>
<feature type="region of interest" description="Complementarity-determining-2">
    <location>
        <begin position="75"/>
        <end position="81"/>
    </location>
</feature>
<feature type="region of interest" description="Framework-3">
    <location>
        <begin position="82"/>
        <end position="113"/>
    </location>
</feature>
<feature type="region of interest" description="Complementarity-determining-3">
    <location>
        <begin position="114"/>
        <end position="120"/>
    </location>
</feature>
<feature type="disulfide bond" evidence="1">
    <location>
        <begin position="43"/>
        <end position="113"/>
    </location>
</feature>